<protein>
    <recommendedName>
        <fullName>Gamma-crystallin M2</fullName>
        <shortName>Gamma-M2</shortName>
    </recommendedName>
</protein>
<evidence type="ECO:0000250" key="1"/>
<evidence type="ECO:0000255" key="2">
    <source>
        <dbReference type="PROSITE-ProRule" id="PRU00028"/>
    </source>
</evidence>
<evidence type="ECO:0000305" key="3"/>
<reference key="1">
    <citation type="submission" date="1994-05" db="EMBL/GenBank/DDBJ databases">
        <authorList>
            <person name="Chuang M.-H."/>
            <person name="Pan F.-M."/>
            <person name="Chiou S.-H."/>
        </authorList>
    </citation>
    <scope>NUCLEOTIDE SEQUENCE [MRNA]</scope>
    <source>
        <tissue>Lens</tissue>
    </source>
</reference>
<sequence length="176" mass="21504">MGKVIFYEDRNFQGRHYECSSDCADLSPYFSRCNSIRVEGGCWVLYEKPNYMGYQYFLTRGEYPDYQRWMGFNDTIRSCRIIPQYRGSYRMRIYERPDFGGQMMEFMDDCPSVYDTFRYRDIHSCHVMDGYWIFYEHPSYRGRQYFMRPGEYKKFSDWGATCPTIGSFRRIMDSWY</sequence>
<feature type="initiator methionine" description="Removed" evidence="1">
    <location>
        <position position="1"/>
    </location>
</feature>
<feature type="chain" id="PRO_0000057578" description="Gamma-crystallin M2">
    <location>
        <begin position="2"/>
        <end position="176"/>
    </location>
</feature>
<feature type="domain" description="Beta/gamma crystallin 'Greek key' 1" evidence="2">
    <location>
        <begin position="2"/>
        <end position="40"/>
    </location>
</feature>
<feature type="domain" description="Beta/gamma crystallin 'Greek key' 2" evidence="2">
    <location>
        <begin position="41"/>
        <end position="83"/>
    </location>
</feature>
<feature type="domain" description="Beta/gamma crystallin 'Greek key' 3" evidence="2">
    <location>
        <begin position="89"/>
        <end position="129"/>
    </location>
</feature>
<feature type="domain" description="Beta/gamma crystallin 'Greek key' 4" evidence="2">
    <location>
        <begin position="130"/>
        <end position="172"/>
    </location>
</feature>
<feature type="region of interest" description="Connecting peptide">
    <location>
        <begin position="84"/>
        <end position="88"/>
    </location>
</feature>
<comment type="function">
    <text>Crystallins are the dominant structural components of the vertebrate eye lens.</text>
</comment>
<comment type="subunit">
    <text evidence="1">Monomer.</text>
</comment>
<comment type="domain">
    <text>Has a two-domain beta-structure, folded into four very similar Greek key motifs.</text>
</comment>
<comment type="similarity">
    <text evidence="3">Belongs to the beta/gamma-crystallin family.</text>
</comment>
<dbReference type="EMBL" id="X79229">
    <property type="protein sequence ID" value="CAA55811.1"/>
    <property type="molecule type" value="mRNA"/>
</dbReference>
<dbReference type="PIR" id="S45015">
    <property type="entry name" value="S45015"/>
</dbReference>
<dbReference type="SMR" id="P48649"/>
<dbReference type="GO" id="GO:0005212">
    <property type="term" value="F:structural constituent of eye lens"/>
    <property type="evidence" value="ECO:0007669"/>
    <property type="project" value="UniProtKB-KW"/>
</dbReference>
<dbReference type="GO" id="GO:0002088">
    <property type="term" value="P:lens development in camera-type eye"/>
    <property type="evidence" value="ECO:0007669"/>
    <property type="project" value="TreeGrafter"/>
</dbReference>
<dbReference type="GO" id="GO:0007601">
    <property type="term" value="P:visual perception"/>
    <property type="evidence" value="ECO:0007669"/>
    <property type="project" value="TreeGrafter"/>
</dbReference>
<dbReference type="FunFam" id="2.60.20.10:FF:000001">
    <property type="entry name" value="Crystallin gamma S"/>
    <property type="match status" value="1"/>
</dbReference>
<dbReference type="FunFam" id="2.60.20.10:FF:000003">
    <property type="entry name" value="Crystallin gamma S"/>
    <property type="match status" value="1"/>
</dbReference>
<dbReference type="Gene3D" id="2.60.20.10">
    <property type="entry name" value="Crystallins"/>
    <property type="match status" value="2"/>
</dbReference>
<dbReference type="InterPro" id="IPR050252">
    <property type="entry name" value="Beta/Gamma-Crystallin"/>
</dbReference>
<dbReference type="InterPro" id="IPR001064">
    <property type="entry name" value="Beta/gamma_crystallin"/>
</dbReference>
<dbReference type="InterPro" id="IPR011024">
    <property type="entry name" value="G_crystallin-like"/>
</dbReference>
<dbReference type="PANTHER" id="PTHR11818">
    <property type="entry name" value="BETA/GAMMA CRYSTALLIN"/>
    <property type="match status" value="1"/>
</dbReference>
<dbReference type="PANTHER" id="PTHR11818:SF42">
    <property type="entry name" value="VOLTAGE-GATED HYDROGEN CHANNEL 1"/>
    <property type="match status" value="1"/>
</dbReference>
<dbReference type="Pfam" id="PF00030">
    <property type="entry name" value="Crystall"/>
    <property type="match status" value="2"/>
</dbReference>
<dbReference type="PRINTS" id="PR01367">
    <property type="entry name" value="BGCRYSTALLIN"/>
</dbReference>
<dbReference type="SMART" id="SM00247">
    <property type="entry name" value="XTALbg"/>
    <property type="match status" value="2"/>
</dbReference>
<dbReference type="SUPFAM" id="SSF49695">
    <property type="entry name" value="gamma-Crystallin-like"/>
    <property type="match status" value="1"/>
</dbReference>
<dbReference type="PROSITE" id="PS50915">
    <property type="entry name" value="CRYSTALLIN_BETA_GAMMA"/>
    <property type="match status" value="4"/>
</dbReference>
<name>CRGM2_CHIID</name>
<proteinExistence type="evidence at transcript level"/>
<gene>
    <name type="primary">GM2</name>
</gene>
<organism>
    <name type="scientific">Chiloscyllium indicum</name>
    <name type="common">Slender bamboo shark</name>
    <name type="synonym">Chiloscyllium colax</name>
    <dbReference type="NCBI Taxonomy" id="443761"/>
    <lineage>
        <taxon>Eukaryota</taxon>
        <taxon>Metazoa</taxon>
        <taxon>Chordata</taxon>
        <taxon>Craniata</taxon>
        <taxon>Vertebrata</taxon>
        <taxon>Chondrichthyes</taxon>
        <taxon>Elasmobranchii</taxon>
        <taxon>Galeomorphii</taxon>
        <taxon>Galeoidea</taxon>
        <taxon>Orectolobiformes</taxon>
        <taxon>Hemiscylliidae</taxon>
        <taxon>Chiloscyllium</taxon>
    </lineage>
</organism>
<accession>P48649</accession>
<keyword id="KW-0273">Eye lens protein</keyword>
<keyword id="KW-0677">Repeat</keyword>